<organism>
    <name type="scientific">Canis lupus familiaris</name>
    <name type="common">Dog</name>
    <name type="synonym">Canis familiaris</name>
    <dbReference type="NCBI Taxonomy" id="9615"/>
    <lineage>
        <taxon>Eukaryota</taxon>
        <taxon>Metazoa</taxon>
        <taxon>Chordata</taxon>
        <taxon>Craniata</taxon>
        <taxon>Vertebrata</taxon>
        <taxon>Euteleostomi</taxon>
        <taxon>Mammalia</taxon>
        <taxon>Eutheria</taxon>
        <taxon>Laurasiatheria</taxon>
        <taxon>Carnivora</taxon>
        <taxon>Caniformia</taxon>
        <taxon>Canidae</taxon>
        <taxon>Canis</taxon>
    </lineage>
</organism>
<dbReference type="EMBL" id="L23429">
    <property type="protein sequence ID" value="AAA16211.1"/>
    <property type="molecule type" value="mRNA"/>
</dbReference>
<dbReference type="PIR" id="A49688">
    <property type="entry name" value="A49688"/>
</dbReference>
<dbReference type="SMR" id="P38486"/>
<dbReference type="FunCoup" id="P38486">
    <property type="interactions" value="11"/>
</dbReference>
<dbReference type="STRING" id="9615.ENSCAFP00000022105"/>
<dbReference type="iPTMnet" id="P38486"/>
<dbReference type="PaxDb" id="9612-ENSCAFP00000022105"/>
<dbReference type="Ensembl" id="ENSCAFT00030005060.1">
    <property type="protein sequence ID" value="ENSCAFP00030004495.1"/>
    <property type="gene ID" value="ENSCAFG00030002726.1"/>
</dbReference>
<dbReference type="eggNOG" id="KOG3587">
    <property type="taxonomic scope" value="Eukaryota"/>
</dbReference>
<dbReference type="InParanoid" id="P38486"/>
<dbReference type="OrthoDB" id="8942303at2759"/>
<dbReference type="Reactome" id="R-CFA-6798695">
    <property type="pathway name" value="Neutrophil degranulation"/>
</dbReference>
<dbReference type="Proteomes" id="UP000002254">
    <property type="component" value="Unplaced"/>
</dbReference>
<dbReference type="Proteomes" id="UP000694429">
    <property type="component" value="Chromosome 8"/>
</dbReference>
<dbReference type="Proteomes" id="UP000694542">
    <property type="component" value="Unplaced"/>
</dbReference>
<dbReference type="Proteomes" id="UP000805418">
    <property type="component" value="Unplaced"/>
</dbReference>
<dbReference type="GO" id="GO:0005737">
    <property type="term" value="C:cytoplasm"/>
    <property type="evidence" value="ECO:0000318"/>
    <property type="project" value="GO_Central"/>
</dbReference>
<dbReference type="GO" id="GO:0005615">
    <property type="term" value="C:extracellular space"/>
    <property type="evidence" value="ECO:0000318"/>
    <property type="project" value="GO_Central"/>
</dbReference>
<dbReference type="GO" id="GO:0001772">
    <property type="term" value="C:immunological synapse"/>
    <property type="evidence" value="ECO:0000318"/>
    <property type="project" value="GO_Central"/>
</dbReference>
<dbReference type="GO" id="GO:0005634">
    <property type="term" value="C:nucleus"/>
    <property type="evidence" value="ECO:0000318"/>
    <property type="project" value="GO_Central"/>
</dbReference>
<dbReference type="GO" id="GO:0005681">
    <property type="term" value="C:spliceosomal complex"/>
    <property type="evidence" value="ECO:0007669"/>
    <property type="project" value="UniProtKB-KW"/>
</dbReference>
<dbReference type="GO" id="GO:0048030">
    <property type="term" value="F:disaccharide binding"/>
    <property type="evidence" value="ECO:0000318"/>
    <property type="project" value="GO_Central"/>
</dbReference>
<dbReference type="GO" id="GO:0019863">
    <property type="term" value="F:IgE binding"/>
    <property type="evidence" value="ECO:0000318"/>
    <property type="project" value="GO_Central"/>
</dbReference>
<dbReference type="GO" id="GO:0043236">
    <property type="term" value="F:laminin binding"/>
    <property type="evidence" value="ECO:0000318"/>
    <property type="project" value="GO_Central"/>
</dbReference>
<dbReference type="GO" id="GO:0030154">
    <property type="term" value="P:cell differentiation"/>
    <property type="evidence" value="ECO:0007669"/>
    <property type="project" value="UniProtKB-KW"/>
</dbReference>
<dbReference type="GO" id="GO:0048245">
    <property type="term" value="P:eosinophil chemotaxis"/>
    <property type="evidence" value="ECO:0000318"/>
    <property type="project" value="GO_Central"/>
</dbReference>
<dbReference type="GO" id="GO:0045087">
    <property type="term" value="P:innate immune response"/>
    <property type="evidence" value="ECO:0007669"/>
    <property type="project" value="UniProtKB-KW"/>
</dbReference>
<dbReference type="GO" id="GO:0048246">
    <property type="term" value="P:macrophage chemotaxis"/>
    <property type="evidence" value="ECO:0000318"/>
    <property type="project" value="GO_Central"/>
</dbReference>
<dbReference type="GO" id="GO:0002548">
    <property type="term" value="P:monocyte chemotaxis"/>
    <property type="evidence" value="ECO:0000318"/>
    <property type="project" value="GO_Central"/>
</dbReference>
<dbReference type="GO" id="GO:0006397">
    <property type="term" value="P:mRNA processing"/>
    <property type="evidence" value="ECO:0007669"/>
    <property type="project" value="UniProtKB-KW"/>
</dbReference>
<dbReference type="GO" id="GO:0045806">
    <property type="term" value="P:negative regulation of endocytosis"/>
    <property type="evidence" value="ECO:0000318"/>
    <property type="project" value="GO_Central"/>
</dbReference>
<dbReference type="GO" id="GO:2001237">
    <property type="term" value="P:negative regulation of extrinsic apoptotic signaling pathway"/>
    <property type="evidence" value="ECO:0000318"/>
    <property type="project" value="GO_Central"/>
</dbReference>
<dbReference type="GO" id="GO:0030593">
    <property type="term" value="P:neutrophil chemotaxis"/>
    <property type="evidence" value="ECO:0000318"/>
    <property type="project" value="GO_Central"/>
</dbReference>
<dbReference type="GO" id="GO:0050918">
    <property type="term" value="P:positive chemotaxis"/>
    <property type="evidence" value="ECO:0000318"/>
    <property type="project" value="GO_Central"/>
</dbReference>
<dbReference type="GO" id="GO:0090280">
    <property type="term" value="P:positive regulation of calcium ion import"/>
    <property type="evidence" value="ECO:0000318"/>
    <property type="project" value="GO_Central"/>
</dbReference>
<dbReference type="GO" id="GO:0008380">
    <property type="term" value="P:RNA splicing"/>
    <property type="evidence" value="ECO:0007669"/>
    <property type="project" value="UniProtKB-KW"/>
</dbReference>
<dbReference type="CDD" id="cd00070">
    <property type="entry name" value="GLECT"/>
    <property type="match status" value="1"/>
</dbReference>
<dbReference type="FunFam" id="2.60.120.200:FF:000023">
    <property type="entry name" value="Galectin"/>
    <property type="match status" value="1"/>
</dbReference>
<dbReference type="Gene3D" id="2.60.120.200">
    <property type="match status" value="1"/>
</dbReference>
<dbReference type="InterPro" id="IPR013320">
    <property type="entry name" value="ConA-like_dom_sf"/>
</dbReference>
<dbReference type="InterPro" id="IPR044156">
    <property type="entry name" value="Galectin-like"/>
</dbReference>
<dbReference type="InterPro" id="IPR001079">
    <property type="entry name" value="Galectin_CRD"/>
</dbReference>
<dbReference type="PANTHER" id="PTHR11346">
    <property type="entry name" value="GALECTIN"/>
    <property type="match status" value="1"/>
</dbReference>
<dbReference type="PANTHER" id="PTHR11346:SF26">
    <property type="entry name" value="GALECTIN-3"/>
    <property type="match status" value="1"/>
</dbReference>
<dbReference type="Pfam" id="PF00337">
    <property type="entry name" value="Gal-bind_lectin"/>
    <property type="match status" value="1"/>
</dbReference>
<dbReference type="SMART" id="SM00908">
    <property type="entry name" value="Gal-bind_lectin"/>
    <property type="match status" value="1"/>
</dbReference>
<dbReference type="SMART" id="SM00276">
    <property type="entry name" value="GLECT"/>
    <property type="match status" value="1"/>
</dbReference>
<dbReference type="SUPFAM" id="SSF49899">
    <property type="entry name" value="Concanavalin A-like lectins/glucanases"/>
    <property type="match status" value="1"/>
</dbReference>
<dbReference type="PROSITE" id="PS51304">
    <property type="entry name" value="GALECTIN"/>
    <property type="match status" value="1"/>
</dbReference>
<sequence length="296" mass="30330">MADSFSLNDALSGSGNPNPQGWPGPWGNQPAGAGGYPGASYPGAYPGQAPPGGYPGQAPPGGYPGQAPPGGYPGQAPPGGYPGQAPPGGYPGQAPPGGYPGQAPPGTYPGPTAPAYPGPTAPGTQPGQPSGPGAYPPPGQPSAPGAYPAAGPFGIPAGPLTVPYDLPLPGGVKPRMLITILGTVRPSANRLALDFKRGNDVAFHFNPRFNEDNKRVIVCNTKLDNIWGKEERQAAFPFESGKPFKIQVLVESDHFKVAVNDAHLLQYNHRMKNLPEISKLGISGDIDLTSASYAMI</sequence>
<protein>
    <recommendedName>
        <fullName>Galectin-3</fullName>
        <shortName>Gal-3</shortName>
    </recommendedName>
    <alternativeName>
        <fullName>35 kDa lectin</fullName>
    </alternativeName>
    <alternativeName>
        <fullName>Carbohydrate-binding protein 35</fullName>
        <shortName>CBP 35</shortName>
    </alternativeName>
    <alternativeName>
        <fullName>Galactose-specific lectin 3</fullName>
    </alternativeName>
    <alternativeName>
        <fullName>IgE-binding protein</fullName>
    </alternativeName>
    <alternativeName>
        <fullName>Laminin-binding protein</fullName>
    </alternativeName>
    <alternativeName>
        <fullName>Lectin L-29</fullName>
    </alternativeName>
    <alternativeName>
        <fullName>Mac-2 antigen</fullName>
    </alternativeName>
</protein>
<accession>P38486</accession>
<reference key="1">
    <citation type="journal article" date="1993" name="J. Biol. Chem.">
        <title>Primary structure of the soluble lactose binding lectin L-29 from rat and dog and interaction of its non-collagenous proline-, glycine-, tyrosine-rich sequence with bacterial and tissue collagenase.</title>
        <authorList>
            <person name="Herrmann J."/>
            <person name="Turck C.W."/>
            <person name="Atchison R.E."/>
            <person name="Huflejt M.E."/>
            <person name="Poulter L."/>
            <person name="Gitt M.A."/>
            <person name="Burlingame A.L."/>
            <person name="Barondes S.H."/>
            <person name="Leffler H."/>
        </authorList>
    </citation>
    <scope>NUCLEOTIDE SEQUENCE [MRNA] OF 12-296</scope>
    <scope>PARTIAL PROTEIN SEQUENCE</scope>
    <scope>ACETYLATION AT ALA-2</scope>
    <source>
        <strain>Cocker spaniel</strain>
        <tissue>Kidney</tissue>
    </source>
</reference>
<reference key="2">
    <citation type="journal article" date="1993" name="J. Biol. Chem.">
        <title>L-29, a soluble lactose-binding lectin, is phosphorylated on serine 6 and serine 12 in vivo and by casein kinase I.</title>
        <authorList>
            <person name="Huflejt M.E."/>
            <person name="Turck C.W."/>
            <person name="Lindstedt R."/>
            <person name="Barondes S.H."/>
            <person name="Leffler H."/>
        </authorList>
    </citation>
    <scope>PHOSPHORYLATION AT SER-6 AND SER-12</scope>
</reference>
<comment type="function">
    <text evidence="1 4">Galactose-specific lectin which binds IgE. May mediate with the alpha-3, beta-1 integrin the stimulation by CSPG4 of endothelial cells migration. Together with DMBT1, required for terminal differentiation of columnar epithelial cells during early embryogenesis (By similarity). In the nucleus: acts as a pre-mRNA splicing factor. Involved in acute inflammatory responses including neutrophil activation and adhesion, chemoattraction of monocytes macrophages, opsonization of apoptotic neutrophils, and activation of mast cells. Together with TRIM16, coordinates the recognition of membrane damage with mobilization of the core autophagy regulators ATG16L1 and BECN1 in response to damaged endomembranes (By similarity). When secreted, interacts with NK cell-activating receptor NCR3/NKp30 acting as an inhibitory ligand which antagonizes NK cell attack (By similarity).</text>
</comment>
<comment type="subunit">
    <text evidence="2 3 4">Probably forms homo- or heterodimers. Interacts with DMBT1 (By similarity). Interacts with CD6 and ALCAM. Forms a complex with the ITGA3, ITGB1 and CSPG4. Interacts with LGALS3BP, LYPD3, ZFTRAF1 and UACA. Interacts with TRIM16; this interaction mediates autophagy of damage endomembranes. Interacts with cargo receptor TMED10; the interaction mediates the translocation from the cytoplasm into the ERGIC (endoplasmic reticulum-Golgi intermediate compartment) and thereby secretion (By similarity). Interacts with and inhibits by binding NCR3/NKp30 (By similarity).</text>
</comment>
<comment type="subcellular location">
    <subcellularLocation>
        <location evidence="4">Cytoplasm</location>
    </subcellularLocation>
    <subcellularLocation>
        <location evidence="4">Nucleus</location>
    </subcellularLocation>
    <subcellularLocation>
        <location evidence="4">Secreted</location>
    </subcellularLocation>
    <text evidence="4">Secreted by a non-classical secretory pathway and associates with the cell surface. Can be secreted; the secretion is dependent on protein unfolding and facilitated by the cargo receptor TMED10; it results in protein translocation from the cytoplasm into the ERGIC (endoplasmic reticulum-Golgi intermediate compartment) followed by vesicle entry and secretion.</text>
</comment>
<comment type="PTM">
    <text evidence="8">The degree of phosphorylation is higher in the cytoplasmic form than in the nuclear form. In protein isolated from a canine kidney cell line, 90% of the phosphate was on Ser-6 and 10% was on Ser-12.</text>
</comment>
<keyword id="KW-0007">Acetylation</keyword>
<keyword id="KW-0963">Cytoplasm</keyword>
<keyword id="KW-0221">Differentiation</keyword>
<keyword id="KW-0903">Direct protein sequencing</keyword>
<keyword id="KW-1015">Disulfide bond</keyword>
<keyword id="KW-0389">IgE-binding protein</keyword>
<keyword id="KW-0391">Immunity</keyword>
<keyword id="KW-0399">Innate immunity</keyword>
<keyword id="KW-0430">Lectin</keyword>
<keyword id="KW-0507">mRNA processing</keyword>
<keyword id="KW-0508">mRNA splicing</keyword>
<keyword id="KW-0539">Nucleus</keyword>
<keyword id="KW-0597">Phosphoprotein</keyword>
<keyword id="KW-1185">Reference proteome</keyword>
<keyword id="KW-0677">Repeat</keyword>
<keyword id="KW-0964">Secreted</keyword>
<keyword id="KW-0747">Spliceosome</keyword>
<evidence type="ECO:0000250" key="1"/>
<evidence type="ECO:0000250" key="2">
    <source>
        <dbReference type="UniProtKB" id="P08699"/>
    </source>
</evidence>
<evidence type="ECO:0000250" key="3">
    <source>
        <dbReference type="UniProtKB" id="P16110"/>
    </source>
</evidence>
<evidence type="ECO:0000250" key="4">
    <source>
        <dbReference type="UniProtKB" id="P17931"/>
    </source>
</evidence>
<evidence type="ECO:0000255" key="5">
    <source>
        <dbReference type="PROSITE-ProRule" id="PRU00639"/>
    </source>
</evidence>
<evidence type="ECO:0000256" key="6">
    <source>
        <dbReference type="SAM" id="MobiDB-lite"/>
    </source>
</evidence>
<evidence type="ECO:0000269" key="7">
    <source>
    </source>
</evidence>
<evidence type="ECO:0000269" key="8">
    <source>
    </source>
</evidence>
<name>LEG3_CANLF</name>
<feature type="initiator methionine" description="Removed" evidence="7">
    <location>
        <position position="1"/>
    </location>
</feature>
<feature type="chain" id="PRO_0000076928" description="Galectin-3">
    <location>
        <begin position="2"/>
        <end position="296"/>
    </location>
</feature>
<feature type="repeat" description="1">
    <location>
        <begin position="36"/>
        <end position="44"/>
    </location>
</feature>
<feature type="repeat" description="2">
    <location>
        <begin position="45"/>
        <end position="53"/>
    </location>
</feature>
<feature type="repeat" description="3">
    <location>
        <begin position="54"/>
        <end position="62"/>
    </location>
</feature>
<feature type="repeat" description="4">
    <location>
        <begin position="63"/>
        <end position="71"/>
    </location>
</feature>
<feature type="repeat" description="5">
    <location>
        <begin position="72"/>
        <end position="80"/>
    </location>
</feature>
<feature type="repeat" description="6">
    <location>
        <begin position="81"/>
        <end position="89"/>
    </location>
</feature>
<feature type="repeat" description="7">
    <location>
        <begin position="90"/>
        <end position="98"/>
    </location>
</feature>
<feature type="repeat" description="8">
    <location>
        <begin position="99"/>
        <end position="107"/>
    </location>
</feature>
<feature type="repeat" description="9; approximate">
    <location>
        <begin position="108"/>
        <end position="115"/>
    </location>
</feature>
<feature type="repeat" description="10">
    <location>
        <begin position="116"/>
        <end position="124"/>
    </location>
</feature>
<feature type="repeat" description="11; approximate">
    <location>
        <begin position="125"/>
        <end position="134"/>
    </location>
</feature>
<feature type="repeat" description="12; approximate">
    <location>
        <begin position="135"/>
        <end position="143"/>
    </location>
</feature>
<feature type="domain" description="Galectin" evidence="5">
    <location>
        <begin position="164"/>
        <end position="294"/>
    </location>
</feature>
<feature type="region of interest" description="Disordered" evidence="6">
    <location>
        <begin position="1"/>
        <end position="150"/>
    </location>
</feature>
<feature type="region of interest" description="12 X 9 AA tandem repeats of Y-P-G-X(3)-P-G-[GAT]">
    <location>
        <begin position="36"/>
        <end position="143"/>
    </location>
</feature>
<feature type="short sequence motif" description="Nuclear export signal" evidence="1">
    <location>
        <begin position="272"/>
        <end position="287"/>
    </location>
</feature>
<feature type="compositionally biased region" description="Polar residues" evidence="6">
    <location>
        <begin position="1"/>
        <end position="11"/>
    </location>
</feature>
<feature type="compositionally biased region" description="Low complexity" evidence="6">
    <location>
        <begin position="12"/>
        <end position="31"/>
    </location>
</feature>
<feature type="compositionally biased region" description="Low complexity" evidence="6">
    <location>
        <begin position="38"/>
        <end position="47"/>
    </location>
</feature>
<feature type="compositionally biased region" description="Pro residues" evidence="6">
    <location>
        <begin position="48"/>
        <end position="120"/>
    </location>
</feature>
<feature type="compositionally biased region" description="Low complexity" evidence="6">
    <location>
        <begin position="121"/>
        <end position="133"/>
    </location>
</feature>
<feature type="binding site" evidence="1">
    <location>
        <begin position="227"/>
        <end position="233"/>
    </location>
    <ligand>
        <name>a beta-D-galactoside</name>
        <dbReference type="ChEBI" id="CHEBI:28034"/>
    </ligand>
</feature>
<feature type="modified residue" description="N-acetylalanine" evidence="7">
    <location>
        <position position="2"/>
    </location>
</feature>
<feature type="modified residue" description="Phosphoserine; by CK1" evidence="8">
    <location>
        <position position="6"/>
    </location>
</feature>
<feature type="modified residue" description="Phosphoserine; by CK1" evidence="8">
    <location>
        <position position="12"/>
    </location>
</feature>
<feature type="disulfide bond" description="Interchain" evidence="1">
    <location>
        <position position="219"/>
    </location>
</feature>
<proteinExistence type="evidence at protein level"/>
<gene>
    <name type="primary">LGALS3</name>
</gene>